<gene>
    <name evidence="1" type="primary">gatA</name>
    <name type="ordered locus">PPA1123</name>
</gene>
<evidence type="ECO:0000255" key="1">
    <source>
        <dbReference type="HAMAP-Rule" id="MF_00120"/>
    </source>
</evidence>
<protein>
    <recommendedName>
        <fullName evidence="1">Glutamyl-tRNA(Gln) amidotransferase subunit A</fullName>
        <shortName evidence="1">Glu-ADT subunit A</shortName>
        <ecNumber evidence="1">6.3.5.7</ecNumber>
    </recommendedName>
</protein>
<comment type="function">
    <text evidence="1">Allows the formation of correctly charged Gln-tRNA(Gln) through the transamidation of misacylated Glu-tRNA(Gln) in organisms which lack glutaminyl-tRNA synthetase. The reaction takes place in the presence of glutamine and ATP through an activated gamma-phospho-Glu-tRNA(Gln).</text>
</comment>
<comment type="catalytic activity">
    <reaction evidence="1">
        <text>L-glutamyl-tRNA(Gln) + L-glutamine + ATP + H2O = L-glutaminyl-tRNA(Gln) + L-glutamate + ADP + phosphate + H(+)</text>
        <dbReference type="Rhea" id="RHEA:17521"/>
        <dbReference type="Rhea" id="RHEA-COMP:9681"/>
        <dbReference type="Rhea" id="RHEA-COMP:9684"/>
        <dbReference type="ChEBI" id="CHEBI:15377"/>
        <dbReference type="ChEBI" id="CHEBI:15378"/>
        <dbReference type="ChEBI" id="CHEBI:29985"/>
        <dbReference type="ChEBI" id="CHEBI:30616"/>
        <dbReference type="ChEBI" id="CHEBI:43474"/>
        <dbReference type="ChEBI" id="CHEBI:58359"/>
        <dbReference type="ChEBI" id="CHEBI:78520"/>
        <dbReference type="ChEBI" id="CHEBI:78521"/>
        <dbReference type="ChEBI" id="CHEBI:456216"/>
        <dbReference type="EC" id="6.3.5.7"/>
    </reaction>
</comment>
<comment type="subunit">
    <text evidence="1">Heterotrimer of A, B and C subunits.</text>
</comment>
<comment type="similarity">
    <text evidence="1">Belongs to the amidase family. GatA subfamily.</text>
</comment>
<reference key="1">
    <citation type="journal article" date="2004" name="Science">
        <title>The complete genome sequence of Propionibacterium acnes, a commensal of human skin.</title>
        <authorList>
            <person name="Brueggemann H."/>
            <person name="Henne A."/>
            <person name="Hoster F."/>
            <person name="Liesegang H."/>
            <person name="Wiezer A."/>
            <person name="Strittmatter A."/>
            <person name="Hujer S."/>
            <person name="Duerre P."/>
            <person name="Gottschalk G."/>
        </authorList>
    </citation>
    <scope>NUCLEOTIDE SEQUENCE [LARGE SCALE GENOMIC DNA]</scope>
    <source>
        <strain>DSM 16379 / KPA171202</strain>
    </source>
</reference>
<feature type="chain" id="PRO_0000241131" description="Glutamyl-tRNA(Gln) amidotransferase subunit A">
    <location>
        <begin position="1"/>
        <end position="501"/>
    </location>
</feature>
<feature type="active site" description="Charge relay system" evidence="1">
    <location>
        <position position="80"/>
    </location>
</feature>
<feature type="active site" description="Charge relay system" evidence="1">
    <location>
        <position position="155"/>
    </location>
</feature>
<feature type="active site" description="Acyl-ester intermediate" evidence="1">
    <location>
        <position position="179"/>
    </location>
</feature>
<proteinExistence type="inferred from homology"/>
<dbReference type="EC" id="6.3.5.7" evidence="1"/>
<dbReference type="EMBL" id="AE017283">
    <property type="protein sequence ID" value="AAT82871.1"/>
    <property type="molecule type" value="Genomic_DNA"/>
</dbReference>
<dbReference type="RefSeq" id="WP_002531385.1">
    <property type="nucleotide sequence ID" value="NZ_CP025935.1"/>
</dbReference>
<dbReference type="SMR" id="Q6A8P5"/>
<dbReference type="EnsemblBacteria" id="AAT82871">
    <property type="protein sequence ID" value="AAT82871"/>
    <property type="gene ID" value="PPA1123"/>
</dbReference>
<dbReference type="KEGG" id="pac:PPA1123"/>
<dbReference type="PATRIC" id="fig|267747.3.peg.1161"/>
<dbReference type="eggNOG" id="COG0154">
    <property type="taxonomic scope" value="Bacteria"/>
</dbReference>
<dbReference type="HOGENOM" id="CLU_009600_0_3_11"/>
<dbReference type="Proteomes" id="UP000000603">
    <property type="component" value="Chromosome"/>
</dbReference>
<dbReference type="GO" id="GO:0030956">
    <property type="term" value="C:glutamyl-tRNA(Gln) amidotransferase complex"/>
    <property type="evidence" value="ECO:0007669"/>
    <property type="project" value="InterPro"/>
</dbReference>
<dbReference type="GO" id="GO:0005524">
    <property type="term" value="F:ATP binding"/>
    <property type="evidence" value="ECO:0007669"/>
    <property type="project" value="UniProtKB-KW"/>
</dbReference>
<dbReference type="GO" id="GO:0050567">
    <property type="term" value="F:glutaminyl-tRNA synthase (glutamine-hydrolyzing) activity"/>
    <property type="evidence" value="ECO:0007669"/>
    <property type="project" value="UniProtKB-UniRule"/>
</dbReference>
<dbReference type="GO" id="GO:0006412">
    <property type="term" value="P:translation"/>
    <property type="evidence" value="ECO:0007669"/>
    <property type="project" value="UniProtKB-UniRule"/>
</dbReference>
<dbReference type="Gene3D" id="3.90.1300.10">
    <property type="entry name" value="Amidase signature (AS) domain"/>
    <property type="match status" value="1"/>
</dbReference>
<dbReference type="HAMAP" id="MF_00120">
    <property type="entry name" value="GatA"/>
    <property type="match status" value="1"/>
</dbReference>
<dbReference type="InterPro" id="IPR000120">
    <property type="entry name" value="Amidase"/>
</dbReference>
<dbReference type="InterPro" id="IPR020556">
    <property type="entry name" value="Amidase_CS"/>
</dbReference>
<dbReference type="InterPro" id="IPR023631">
    <property type="entry name" value="Amidase_dom"/>
</dbReference>
<dbReference type="InterPro" id="IPR036928">
    <property type="entry name" value="AS_sf"/>
</dbReference>
<dbReference type="InterPro" id="IPR004412">
    <property type="entry name" value="GatA"/>
</dbReference>
<dbReference type="NCBIfam" id="TIGR00132">
    <property type="entry name" value="gatA"/>
    <property type="match status" value="1"/>
</dbReference>
<dbReference type="PANTHER" id="PTHR11895:SF151">
    <property type="entry name" value="GLUTAMYL-TRNA(GLN) AMIDOTRANSFERASE SUBUNIT A"/>
    <property type="match status" value="1"/>
</dbReference>
<dbReference type="PANTHER" id="PTHR11895">
    <property type="entry name" value="TRANSAMIDASE"/>
    <property type="match status" value="1"/>
</dbReference>
<dbReference type="Pfam" id="PF01425">
    <property type="entry name" value="Amidase"/>
    <property type="match status" value="1"/>
</dbReference>
<dbReference type="SUPFAM" id="SSF75304">
    <property type="entry name" value="Amidase signature (AS) enzymes"/>
    <property type="match status" value="1"/>
</dbReference>
<dbReference type="PROSITE" id="PS00571">
    <property type="entry name" value="AMIDASES"/>
    <property type="match status" value="1"/>
</dbReference>
<accession>Q6A8P5</accession>
<keyword id="KW-0067">ATP-binding</keyword>
<keyword id="KW-0436">Ligase</keyword>
<keyword id="KW-0547">Nucleotide-binding</keyword>
<keyword id="KW-0648">Protein biosynthesis</keyword>
<name>GATA_CUTAK</name>
<sequence length="501" mass="53109">MNELLTLTAAELGERIAARQISSEEVTQAHLDRISEVDGDIHAFLLVDHAGALDAARRIDARIADGEHLGPLAGVPLAVKDLFCTKGIATTASSQMLEGWIPPYDSTIVTRCKDAGMVILGKTNLDEFAMGSSTETSAFGPTHNPWDLERVPGGSGGGSAASLASFQAPLALGTDTGGSIRQPGAVTGTVGIKPTYGSTSRYGVIAMASSLDTPGPCARTVLDAALLHQAIAGHDAMDQTTINQPTPAVVEAARQTDVSGVRIGVVTELSGQVYDPQVEARFHEAVEMLIEAGAEVVEVSCPNFDLALPAYYLIQPAEVSSNLARYDAMRYGLRVNDDGEHSAEQVMRATRGAGLGAEAKRRIILGTYALSAGYYDAYYGSAQKVRTLIQRDFEKAWQMCDVLVSPATPTTAFRLGERTADPMAMYRSDLCTVPANMAGSPAGSFPIGLSETDGMPVGMQVMAPIMADDRIYRVGAALERLLHEKWGAPLLAKAPEVRGER</sequence>
<organism>
    <name type="scientific">Cutibacterium acnes (strain DSM 16379 / KPA171202)</name>
    <name type="common">Propionibacterium acnes</name>
    <dbReference type="NCBI Taxonomy" id="267747"/>
    <lineage>
        <taxon>Bacteria</taxon>
        <taxon>Bacillati</taxon>
        <taxon>Actinomycetota</taxon>
        <taxon>Actinomycetes</taxon>
        <taxon>Propionibacteriales</taxon>
        <taxon>Propionibacteriaceae</taxon>
        <taxon>Cutibacterium</taxon>
    </lineage>
</organism>